<gene>
    <name type="primary">Egfl8</name>
    <name type="synonym">Ng3</name>
</gene>
<comment type="subcellular location">
    <subcellularLocation>
        <location evidence="7">Secreted</location>
    </subcellularLocation>
</comment>
<comment type="alternative products">
    <event type="alternative splicing"/>
    <isoform>
        <id>Q6GUQ1-1</id>
        <name>1</name>
        <sequence type="displayed"/>
    </isoform>
    <isoform>
        <id>Q6GUQ1-2</id>
        <name>2</name>
        <sequence type="described" ref="VSP_026672"/>
    </isoform>
</comment>
<comment type="tissue specificity">
    <text evidence="5">Ubiquitously expressed in brain, kidney, thymus and lung.</text>
</comment>
<comment type="developmental stage">
    <text evidence="5">Not detected before 11.5 dpc and expression levels vary between 11.5 dpc and 15.5 dpc.</text>
</comment>
<accession>Q6GUQ1</accession>
<accession>O35447</accession>
<accession>Q3UFB4</accession>
<evidence type="ECO:0000250" key="1"/>
<evidence type="ECO:0000255" key="2"/>
<evidence type="ECO:0000255" key="3">
    <source>
        <dbReference type="PROSITE-ProRule" id="PRU00076"/>
    </source>
</evidence>
<evidence type="ECO:0000255" key="4">
    <source>
        <dbReference type="PROSITE-ProRule" id="PRU00384"/>
    </source>
</evidence>
<evidence type="ECO:0000269" key="5">
    <source>
    </source>
</evidence>
<evidence type="ECO:0000303" key="6">
    <source>
    </source>
</evidence>
<evidence type="ECO:0000305" key="7"/>
<dbReference type="EMBL" id="AY635583">
    <property type="protein sequence ID" value="AAT47548.1"/>
    <property type="molecule type" value="mRNA"/>
</dbReference>
<dbReference type="EMBL" id="AK148723">
    <property type="protein sequence ID" value="BAE28647.1"/>
    <property type="molecule type" value="mRNA"/>
</dbReference>
<dbReference type="EMBL" id="AF030001">
    <property type="protein sequence ID" value="AAB82010.1"/>
    <property type="molecule type" value="Genomic_DNA"/>
</dbReference>
<dbReference type="CCDS" id="CCDS28651.1">
    <molecule id="Q6GUQ1-1"/>
</dbReference>
<dbReference type="PIR" id="T09065">
    <property type="entry name" value="T09065"/>
</dbReference>
<dbReference type="RefSeq" id="NP_001390774.1">
    <molecule id="Q6GUQ1-1"/>
    <property type="nucleotide sequence ID" value="NM_001403845.1"/>
</dbReference>
<dbReference type="RefSeq" id="NP_690886.3">
    <molecule id="Q6GUQ1-1"/>
    <property type="nucleotide sequence ID" value="NM_152922.4"/>
</dbReference>
<dbReference type="RefSeq" id="XP_006525242.1">
    <property type="nucleotide sequence ID" value="XM_006525179.3"/>
</dbReference>
<dbReference type="RefSeq" id="XP_036016745.1">
    <molecule id="Q6GUQ1-1"/>
    <property type="nucleotide sequence ID" value="XM_036160852.1"/>
</dbReference>
<dbReference type="FunCoup" id="Q6GUQ1">
    <property type="interactions" value="21"/>
</dbReference>
<dbReference type="STRING" id="10090.ENSMUSP00000015611"/>
<dbReference type="GlyCosmos" id="Q6GUQ1">
    <property type="glycosylation" value="1 site, No reported glycans"/>
</dbReference>
<dbReference type="GlyGen" id="Q6GUQ1">
    <property type="glycosylation" value="2 sites"/>
</dbReference>
<dbReference type="iPTMnet" id="Q6GUQ1"/>
<dbReference type="PhosphoSitePlus" id="Q6GUQ1"/>
<dbReference type="PaxDb" id="10090-ENSMUSP00000015611"/>
<dbReference type="ProteomicsDB" id="277836">
    <molecule id="Q6GUQ1-1"/>
</dbReference>
<dbReference type="ProteomicsDB" id="277837">
    <molecule id="Q6GUQ1-2"/>
</dbReference>
<dbReference type="Antibodypedia" id="34956">
    <property type="antibodies" value="63 antibodies from 21 providers"/>
</dbReference>
<dbReference type="DNASU" id="81701"/>
<dbReference type="Ensembl" id="ENSMUST00000015611.14">
    <molecule id="Q6GUQ1-1"/>
    <property type="protein sequence ID" value="ENSMUSP00000015611.8"/>
    <property type="gene ID" value="ENSMUSG00000015467.15"/>
</dbReference>
<dbReference type="Ensembl" id="ENSMUST00000097345.10">
    <molecule id="Q6GUQ1-2"/>
    <property type="protein sequence ID" value="ENSMUSP00000094958.4"/>
    <property type="gene ID" value="ENSMUSG00000015467.15"/>
</dbReference>
<dbReference type="GeneID" id="81701"/>
<dbReference type="KEGG" id="mmu:81701"/>
<dbReference type="UCSC" id="uc008cdb.2">
    <molecule id="Q6GUQ1-1"/>
    <property type="organism name" value="mouse"/>
</dbReference>
<dbReference type="UCSC" id="uc008cdc.2">
    <molecule id="Q6GUQ1-2"/>
    <property type="organism name" value="mouse"/>
</dbReference>
<dbReference type="AGR" id="MGI:1932094"/>
<dbReference type="CTD" id="80864"/>
<dbReference type="MGI" id="MGI:1932094">
    <property type="gene designation" value="Egfl8"/>
</dbReference>
<dbReference type="VEuPathDB" id="HostDB:ENSMUSG00000015467"/>
<dbReference type="eggNOG" id="KOG1217">
    <property type="taxonomic scope" value="Eukaryota"/>
</dbReference>
<dbReference type="GeneTree" id="ENSGT00940000162975"/>
<dbReference type="InParanoid" id="Q6GUQ1"/>
<dbReference type="OMA" id="QPDQCEC"/>
<dbReference type="OrthoDB" id="155976at2759"/>
<dbReference type="PhylomeDB" id="Q6GUQ1"/>
<dbReference type="TreeFam" id="TF331360"/>
<dbReference type="BioGRID-ORCS" id="81701">
    <property type="hits" value="1 hit in 77 CRISPR screens"/>
</dbReference>
<dbReference type="PRO" id="PR:Q6GUQ1"/>
<dbReference type="Proteomes" id="UP000000589">
    <property type="component" value="Chromosome 17"/>
</dbReference>
<dbReference type="RNAct" id="Q6GUQ1">
    <property type="molecule type" value="protein"/>
</dbReference>
<dbReference type="Bgee" id="ENSMUSG00000015467">
    <property type="expression patterns" value="Expressed in thymus and 61 other cell types or tissues"/>
</dbReference>
<dbReference type="ExpressionAtlas" id="Q6GUQ1">
    <property type="expression patterns" value="baseline and differential"/>
</dbReference>
<dbReference type="GO" id="GO:0005576">
    <property type="term" value="C:extracellular region"/>
    <property type="evidence" value="ECO:0007669"/>
    <property type="project" value="UniProtKB-SubCell"/>
</dbReference>
<dbReference type="GO" id="GO:0005509">
    <property type="term" value="F:calcium ion binding"/>
    <property type="evidence" value="ECO:0000303"/>
    <property type="project" value="UniProtKB"/>
</dbReference>
<dbReference type="CDD" id="cd00054">
    <property type="entry name" value="EGF_CA"/>
    <property type="match status" value="2"/>
</dbReference>
<dbReference type="FunFam" id="2.10.25.10:FF:000394">
    <property type="entry name" value="Epidermal growth factor-like protein 8"/>
    <property type="match status" value="1"/>
</dbReference>
<dbReference type="FunFam" id="2.10.25.10:FF:000010">
    <property type="entry name" value="Pro-epidermal growth factor"/>
    <property type="match status" value="1"/>
</dbReference>
<dbReference type="Gene3D" id="2.10.25.10">
    <property type="entry name" value="Laminin"/>
    <property type="match status" value="2"/>
</dbReference>
<dbReference type="InterPro" id="IPR050969">
    <property type="entry name" value="Dev_Signal_Modulators"/>
</dbReference>
<dbReference type="InterPro" id="IPR001881">
    <property type="entry name" value="EGF-like_Ca-bd_dom"/>
</dbReference>
<dbReference type="InterPro" id="IPR000742">
    <property type="entry name" value="EGF-like_dom"/>
</dbReference>
<dbReference type="InterPro" id="IPR000152">
    <property type="entry name" value="EGF-type_Asp/Asn_hydroxyl_site"/>
</dbReference>
<dbReference type="InterPro" id="IPR018097">
    <property type="entry name" value="EGF_Ca-bd_CS"/>
</dbReference>
<dbReference type="InterPro" id="IPR011489">
    <property type="entry name" value="EMI_domain"/>
</dbReference>
<dbReference type="InterPro" id="IPR009030">
    <property type="entry name" value="Growth_fac_rcpt_cys_sf"/>
</dbReference>
<dbReference type="InterPro" id="IPR049883">
    <property type="entry name" value="NOTCH1_EGF-like"/>
</dbReference>
<dbReference type="PANTHER" id="PTHR14949">
    <property type="entry name" value="EGF-LIKE-DOMAIN, MULTIPLE 7, 8"/>
    <property type="match status" value="1"/>
</dbReference>
<dbReference type="PANTHER" id="PTHR14949:SF27">
    <property type="entry name" value="EPIDERMAL GROWTH FACTOR-LIKE PROTEIN 8"/>
    <property type="match status" value="1"/>
</dbReference>
<dbReference type="Pfam" id="PF07645">
    <property type="entry name" value="EGF_CA"/>
    <property type="match status" value="1"/>
</dbReference>
<dbReference type="Pfam" id="PF07546">
    <property type="entry name" value="EMI"/>
    <property type="match status" value="1"/>
</dbReference>
<dbReference type="SMART" id="SM00181">
    <property type="entry name" value="EGF"/>
    <property type="match status" value="2"/>
</dbReference>
<dbReference type="SMART" id="SM00179">
    <property type="entry name" value="EGF_CA"/>
    <property type="match status" value="1"/>
</dbReference>
<dbReference type="SUPFAM" id="SSF57196">
    <property type="entry name" value="EGF/Laminin"/>
    <property type="match status" value="1"/>
</dbReference>
<dbReference type="SUPFAM" id="SSF57184">
    <property type="entry name" value="Growth factor receptor domain"/>
    <property type="match status" value="1"/>
</dbReference>
<dbReference type="PROSITE" id="PS00010">
    <property type="entry name" value="ASX_HYDROXYL"/>
    <property type="match status" value="1"/>
</dbReference>
<dbReference type="PROSITE" id="PS00022">
    <property type="entry name" value="EGF_1"/>
    <property type="match status" value="1"/>
</dbReference>
<dbReference type="PROSITE" id="PS01186">
    <property type="entry name" value="EGF_2"/>
    <property type="match status" value="1"/>
</dbReference>
<dbReference type="PROSITE" id="PS50026">
    <property type="entry name" value="EGF_3"/>
    <property type="match status" value="2"/>
</dbReference>
<dbReference type="PROSITE" id="PS01187">
    <property type="entry name" value="EGF_CA"/>
    <property type="match status" value="1"/>
</dbReference>
<dbReference type="PROSITE" id="PS51041">
    <property type="entry name" value="EMI"/>
    <property type="match status" value="1"/>
</dbReference>
<sequence>MGLWAELCISLRGLSFFLVLMTGEGTRGGSFKESLGVCSKQTLLVPLRYNESYSQPVYKPYLTLCAGRRICSTYRTTYRVAWREVRREVPQTHVVCCQGWKKPHPGALTCDAICSKPCLNGGVCTGPDRCECAPGWGGKHCHVDVDECRASLTLCSHGCLNTLGSFLCSCPHPLVLGLDGRTCAGGPPESPTSASILSVAVREADSEEERALRWEVAELRGRLEKLEQWATQAGAWVRAVLPMPPEELRPEQVAELWGRGDRIESLSDQVLLLEERLGACACEDNSLGPSLRG</sequence>
<protein>
    <recommendedName>
        <fullName>Epidermal growth factor-like protein 8</fullName>
        <shortName>EGF-like protein 8</shortName>
    </recommendedName>
</protein>
<keyword id="KW-0025">Alternative splicing</keyword>
<keyword id="KW-0106">Calcium</keyword>
<keyword id="KW-0175">Coiled coil</keyword>
<keyword id="KW-1015">Disulfide bond</keyword>
<keyword id="KW-0245">EGF-like domain</keyword>
<keyword id="KW-0325">Glycoprotein</keyword>
<keyword id="KW-1185">Reference proteome</keyword>
<keyword id="KW-0677">Repeat</keyword>
<keyword id="KW-0964">Secreted</keyword>
<keyword id="KW-0732">Signal</keyword>
<proteinExistence type="evidence at transcript level"/>
<name>EGFL8_MOUSE</name>
<feature type="signal peptide" evidence="2">
    <location>
        <begin position="1"/>
        <end position="28"/>
    </location>
</feature>
<feature type="chain" id="PRO_0000007532" description="Epidermal growth factor-like protein 8">
    <location>
        <begin position="29"/>
        <end position="293"/>
    </location>
</feature>
<feature type="domain" description="EMI" evidence="4">
    <location>
        <begin position="34"/>
        <end position="112"/>
    </location>
</feature>
<feature type="domain" description="EGF-like 1" evidence="3">
    <location>
        <begin position="111"/>
        <end position="142"/>
    </location>
</feature>
<feature type="domain" description="EGF-like 2; calcium-binding" evidence="3">
    <location>
        <begin position="144"/>
        <end position="184"/>
    </location>
</feature>
<feature type="coiled-coil region" evidence="2">
    <location>
        <begin position="206"/>
        <end position="235"/>
    </location>
</feature>
<feature type="glycosylation site" description="N-linked (GlcNAc...) asparagine" evidence="2">
    <location>
        <position position="50"/>
    </location>
</feature>
<feature type="disulfide bond" evidence="1">
    <location>
        <begin position="38"/>
        <end position="97"/>
    </location>
</feature>
<feature type="disulfide bond" evidence="1">
    <location>
        <begin position="65"/>
        <end position="71"/>
    </location>
</feature>
<feature type="disulfide bond" evidence="1">
    <location>
        <begin position="96"/>
        <end position="110"/>
    </location>
</feature>
<feature type="disulfide bond" evidence="1">
    <location>
        <begin position="114"/>
        <end position="124"/>
    </location>
</feature>
<feature type="disulfide bond" evidence="1">
    <location>
        <begin position="118"/>
        <end position="130"/>
    </location>
</feature>
<feature type="disulfide bond" evidence="1">
    <location>
        <begin position="132"/>
        <end position="141"/>
    </location>
</feature>
<feature type="disulfide bond" evidence="1">
    <location>
        <begin position="148"/>
        <end position="159"/>
    </location>
</feature>
<feature type="disulfide bond" evidence="1">
    <location>
        <begin position="155"/>
        <end position="168"/>
    </location>
</feature>
<feature type="disulfide bond" evidence="1">
    <location>
        <begin position="170"/>
        <end position="183"/>
    </location>
</feature>
<feature type="splice variant" id="VSP_026672" description="In isoform 2." evidence="6">
    <location>
        <begin position="240"/>
        <end position="269"/>
    </location>
</feature>
<feature type="sequence conflict" description="In Ref. 1; AAT47548." evidence="7" ref="1">
    <original>T</original>
    <variation>A</variation>
    <location>
        <position position="26"/>
    </location>
</feature>
<feature type="sequence conflict" description="In Ref. 1; AAT47548." evidence="7" ref="1">
    <original>T</original>
    <variation>K</variation>
    <location>
        <position position="231"/>
    </location>
</feature>
<reference key="1">
    <citation type="journal article" date="2004" name="Dev. Dyn.">
        <title>Egfl7, a novel epidermal growth factor-domain gene expressed in endothelial cells.</title>
        <authorList>
            <person name="Fitch M.J."/>
            <person name="Campagnolo L."/>
            <person name="Kuhnert F."/>
            <person name="Stuhlmann H."/>
        </authorList>
    </citation>
    <scope>NUCLEOTIDE SEQUENCE [MRNA] (ISOFORM 1)</scope>
    <scope>TISSUE SPECIFICITY</scope>
    <scope>DEVELOPMENTAL STAGE</scope>
    <source>
        <strain>CD-1</strain>
    </source>
</reference>
<reference key="2">
    <citation type="journal article" date="2005" name="Science">
        <title>The transcriptional landscape of the mammalian genome.</title>
        <authorList>
            <person name="Carninci P."/>
            <person name="Kasukawa T."/>
            <person name="Katayama S."/>
            <person name="Gough J."/>
            <person name="Frith M.C."/>
            <person name="Maeda N."/>
            <person name="Oyama R."/>
            <person name="Ravasi T."/>
            <person name="Lenhard B."/>
            <person name="Wells C."/>
            <person name="Kodzius R."/>
            <person name="Shimokawa K."/>
            <person name="Bajic V.B."/>
            <person name="Brenner S.E."/>
            <person name="Batalov S."/>
            <person name="Forrest A.R."/>
            <person name="Zavolan M."/>
            <person name="Davis M.J."/>
            <person name="Wilming L.G."/>
            <person name="Aidinis V."/>
            <person name="Allen J.E."/>
            <person name="Ambesi-Impiombato A."/>
            <person name="Apweiler R."/>
            <person name="Aturaliya R.N."/>
            <person name="Bailey T.L."/>
            <person name="Bansal M."/>
            <person name="Baxter L."/>
            <person name="Beisel K.W."/>
            <person name="Bersano T."/>
            <person name="Bono H."/>
            <person name="Chalk A.M."/>
            <person name="Chiu K.P."/>
            <person name="Choudhary V."/>
            <person name="Christoffels A."/>
            <person name="Clutterbuck D.R."/>
            <person name="Crowe M.L."/>
            <person name="Dalla E."/>
            <person name="Dalrymple B.P."/>
            <person name="de Bono B."/>
            <person name="Della Gatta G."/>
            <person name="di Bernardo D."/>
            <person name="Down T."/>
            <person name="Engstrom P."/>
            <person name="Fagiolini M."/>
            <person name="Faulkner G."/>
            <person name="Fletcher C.F."/>
            <person name="Fukushima T."/>
            <person name="Furuno M."/>
            <person name="Futaki S."/>
            <person name="Gariboldi M."/>
            <person name="Georgii-Hemming P."/>
            <person name="Gingeras T.R."/>
            <person name="Gojobori T."/>
            <person name="Green R.E."/>
            <person name="Gustincich S."/>
            <person name="Harbers M."/>
            <person name="Hayashi Y."/>
            <person name="Hensch T.K."/>
            <person name="Hirokawa N."/>
            <person name="Hill D."/>
            <person name="Huminiecki L."/>
            <person name="Iacono M."/>
            <person name="Ikeo K."/>
            <person name="Iwama A."/>
            <person name="Ishikawa T."/>
            <person name="Jakt M."/>
            <person name="Kanapin A."/>
            <person name="Katoh M."/>
            <person name="Kawasawa Y."/>
            <person name="Kelso J."/>
            <person name="Kitamura H."/>
            <person name="Kitano H."/>
            <person name="Kollias G."/>
            <person name="Krishnan S.P."/>
            <person name="Kruger A."/>
            <person name="Kummerfeld S.K."/>
            <person name="Kurochkin I.V."/>
            <person name="Lareau L.F."/>
            <person name="Lazarevic D."/>
            <person name="Lipovich L."/>
            <person name="Liu J."/>
            <person name="Liuni S."/>
            <person name="McWilliam S."/>
            <person name="Madan Babu M."/>
            <person name="Madera M."/>
            <person name="Marchionni L."/>
            <person name="Matsuda H."/>
            <person name="Matsuzawa S."/>
            <person name="Miki H."/>
            <person name="Mignone F."/>
            <person name="Miyake S."/>
            <person name="Morris K."/>
            <person name="Mottagui-Tabar S."/>
            <person name="Mulder N."/>
            <person name="Nakano N."/>
            <person name="Nakauchi H."/>
            <person name="Ng P."/>
            <person name="Nilsson R."/>
            <person name="Nishiguchi S."/>
            <person name="Nishikawa S."/>
            <person name="Nori F."/>
            <person name="Ohara O."/>
            <person name="Okazaki Y."/>
            <person name="Orlando V."/>
            <person name="Pang K.C."/>
            <person name="Pavan W.J."/>
            <person name="Pavesi G."/>
            <person name="Pesole G."/>
            <person name="Petrovsky N."/>
            <person name="Piazza S."/>
            <person name="Reed J."/>
            <person name="Reid J.F."/>
            <person name="Ring B.Z."/>
            <person name="Ringwald M."/>
            <person name="Rost B."/>
            <person name="Ruan Y."/>
            <person name="Salzberg S.L."/>
            <person name="Sandelin A."/>
            <person name="Schneider C."/>
            <person name="Schoenbach C."/>
            <person name="Sekiguchi K."/>
            <person name="Semple C.A."/>
            <person name="Seno S."/>
            <person name="Sessa L."/>
            <person name="Sheng Y."/>
            <person name="Shibata Y."/>
            <person name="Shimada H."/>
            <person name="Shimada K."/>
            <person name="Silva D."/>
            <person name="Sinclair B."/>
            <person name="Sperling S."/>
            <person name="Stupka E."/>
            <person name="Sugiura K."/>
            <person name="Sultana R."/>
            <person name="Takenaka Y."/>
            <person name="Taki K."/>
            <person name="Tammoja K."/>
            <person name="Tan S.L."/>
            <person name="Tang S."/>
            <person name="Taylor M.S."/>
            <person name="Tegner J."/>
            <person name="Teichmann S.A."/>
            <person name="Ueda H.R."/>
            <person name="van Nimwegen E."/>
            <person name="Verardo R."/>
            <person name="Wei C.L."/>
            <person name="Yagi K."/>
            <person name="Yamanishi H."/>
            <person name="Zabarovsky E."/>
            <person name="Zhu S."/>
            <person name="Zimmer A."/>
            <person name="Hide W."/>
            <person name="Bult C."/>
            <person name="Grimmond S.M."/>
            <person name="Teasdale R.D."/>
            <person name="Liu E.T."/>
            <person name="Brusic V."/>
            <person name="Quackenbush J."/>
            <person name="Wahlestedt C."/>
            <person name="Mattick J.S."/>
            <person name="Hume D.A."/>
            <person name="Kai C."/>
            <person name="Sasaki D."/>
            <person name="Tomaru Y."/>
            <person name="Fukuda S."/>
            <person name="Kanamori-Katayama M."/>
            <person name="Suzuki M."/>
            <person name="Aoki J."/>
            <person name="Arakawa T."/>
            <person name="Iida J."/>
            <person name="Imamura K."/>
            <person name="Itoh M."/>
            <person name="Kato T."/>
            <person name="Kawaji H."/>
            <person name="Kawagashira N."/>
            <person name="Kawashima T."/>
            <person name="Kojima M."/>
            <person name="Kondo S."/>
            <person name="Konno H."/>
            <person name="Nakano K."/>
            <person name="Ninomiya N."/>
            <person name="Nishio T."/>
            <person name="Okada M."/>
            <person name="Plessy C."/>
            <person name="Shibata K."/>
            <person name="Shiraki T."/>
            <person name="Suzuki S."/>
            <person name="Tagami M."/>
            <person name="Waki K."/>
            <person name="Watahiki A."/>
            <person name="Okamura-Oho Y."/>
            <person name="Suzuki H."/>
            <person name="Kawai J."/>
            <person name="Hayashizaki Y."/>
        </authorList>
    </citation>
    <scope>NUCLEOTIDE SEQUENCE [LARGE SCALE MRNA] (ISOFORM 2)</scope>
    <source>
        <strain>C57BL/6J</strain>
        <tissue>Sympathetic ganglion</tissue>
    </source>
</reference>
<reference key="3">
    <citation type="journal article" date="2003" name="Genome Res.">
        <title>Analysis of the gene-dense major histocompatibility complex class III region and its comparison to mouse.</title>
        <authorList>
            <person name="Xie T."/>
            <person name="Rowen L."/>
            <person name="Aguado B."/>
            <person name="Ahearn M.E."/>
            <person name="Madan A."/>
            <person name="Qin S."/>
            <person name="Campbell R.D."/>
            <person name="Hood L."/>
        </authorList>
    </citation>
    <scope>NUCLEOTIDE SEQUENCE [LARGE SCALE GENOMIC DNA]</scope>
    <source>
        <strain>129</strain>
    </source>
</reference>
<organism>
    <name type="scientific">Mus musculus</name>
    <name type="common">Mouse</name>
    <dbReference type="NCBI Taxonomy" id="10090"/>
    <lineage>
        <taxon>Eukaryota</taxon>
        <taxon>Metazoa</taxon>
        <taxon>Chordata</taxon>
        <taxon>Craniata</taxon>
        <taxon>Vertebrata</taxon>
        <taxon>Euteleostomi</taxon>
        <taxon>Mammalia</taxon>
        <taxon>Eutheria</taxon>
        <taxon>Euarchontoglires</taxon>
        <taxon>Glires</taxon>
        <taxon>Rodentia</taxon>
        <taxon>Myomorpha</taxon>
        <taxon>Muroidea</taxon>
        <taxon>Muridae</taxon>
        <taxon>Murinae</taxon>
        <taxon>Mus</taxon>
        <taxon>Mus</taxon>
    </lineage>
</organism>